<gene>
    <name evidence="1" type="primary">rplK</name>
    <name type="ordered locus">DET0993</name>
</gene>
<comment type="function">
    <text evidence="1">Forms part of the ribosomal stalk which helps the ribosome interact with GTP-bound translation factors.</text>
</comment>
<comment type="subunit">
    <text evidence="1">Part of the ribosomal stalk of the 50S ribosomal subunit. Interacts with L10 and the large rRNA to form the base of the stalk. L10 forms an elongated spine to which L12 dimers bind in a sequential fashion forming a multimeric L10(L12)X complex.</text>
</comment>
<comment type="PTM">
    <text evidence="1">One or more lysine residues are methylated.</text>
</comment>
<comment type="similarity">
    <text evidence="1">Belongs to the universal ribosomal protein uL11 family.</text>
</comment>
<proteinExistence type="inferred from homology"/>
<sequence length="140" mass="14660">MAKKVKAIVKLQIPAGKANPAPPIGPALGQHGINIMGFCKEYNDRTASMAGTIVPAEITIYDDRSFTFITKTPPAADLLKKAAGVEAGSGTPSKSVVAVISKGQLREIASVKMKDLNAVNIEGAERIIEGTARSMGIKVE</sequence>
<protein>
    <recommendedName>
        <fullName evidence="1">Large ribosomal subunit protein uL11</fullName>
    </recommendedName>
    <alternativeName>
        <fullName evidence="2">50S ribosomal protein L11</fullName>
    </alternativeName>
</protein>
<organism>
    <name type="scientific">Dehalococcoides mccartyi (strain ATCC BAA-2266 / KCTC 15142 / 195)</name>
    <name type="common">Dehalococcoides ethenogenes (strain 195)</name>
    <dbReference type="NCBI Taxonomy" id="243164"/>
    <lineage>
        <taxon>Bacteria</taxon>
        <taxon>Bacillati</taxon>
        <taxon>Chloroflexota</taxon>
        <taxon>Dehalococcoidia</taxon>
        <taxon>Dehalococcoidales</taxon>
        <taxon>Dehalococcoidaceae</taxon>
        <taxon>Dehalococcoides</taxon>
    </lineage>
</organism>
<keyword id="KW-0488">Methylation</keyword>
<keyword id="KW-0687">Ribonucleoprotein</keyword>
<keyword id="KW-0689">Ribosomal protein</keyword>
<keyword id="KW-0694">RNA-binding</keyword>
<keyword id="KW-0699">rRNA-binding</keyword>
<reference key="1">
    <citation type="journal article" date="2005" name="Science">
        <title>Genome sequence of the PCE-dechlorinating bacterium Dehalococcoides ethenogenes.</title>
        <authorList>
            <person name="Seshadri R."/>
            <person name="Adrian L."/>
            <person name="Fouts D.E."/>
            <person name="Eisen J.A."/>
            <person name="Phillippy A.M."/>
            <person name="Methe B.A."/>
            <person name="Ward N.L."/>
            <person name="Nelson W.C."/>
            <person name="DeBoy R.T."/>
            <person name="Khouri H.M."/>
            <person name="Kolonay J.F."/>
            <person name="Dodson R.J."/>
            <person name="Daugherty S.C."/>
            <person name="Brinkac L.M."/>
            <person name="Sullivan S.A."/>
            <person name="Madupu R."/>
            <person name="Nelson K.E."/>
            <person name="Kang K.H."/>
            <person name="Impraim M."/>
            <person name="Tran K."/>
            <person name="Robinson J.M."/>
            <person name="Forberger H.A."/>
            <person name="Fraser C.M."/>
            <person name="Zinder S.H."/>
            <person name="Heidelberg J.F."/>
        </authorList>
    </citation>
    <scope>NUCLEOTIDE SEQUENCE [LARGE SCALE GENOMIC DNA]</scope>
    <source>
        <strain>ATCC BAA-2266 / KCTC 15142 / 195</strain>
    </source>
</reference>
<dbReference type="EMBL" id="CP000027">
    <property type="protein sequence ID" value="AAW39781.1"/>
    <property type="molecule type" value="Genomic_DNA"/>
</dbReference>
<dbReference type="RefSeq" id="WP_010936695.1">
    <property type="nucleotide sequence ID" value="NC_002936.3"/>
</dbReference>
<dbReference type="SMR" id="Q3Z7T3"/>
<dbReference type="FunCoup" id="Q3Z7T3">
    <property type="interactions" value="366"/>
</dbReference>
<dbReference type="STRING" id="243164.DET0993"/>
<dbReference type="GeneID" id="3229743"/>
<dbReference type="KEGG" id="det:DET0993"/>
<dbReference type="eggNOG" id="COG0080">
    <property type="taxonomic scope" value="Bacteria"/>
</dbReference>
<dbReference type="HOGENOM" id="CLU_074237_2_1_0"/>
<dbReference type="InParanoid" id="Q3Z7T3"/>
<dbReference type="Proteomes" id="UP000008289">
    <property type="component" value="Chromosome"/>
</dbReference>
<dbReference type="GO" id="GO:0022625">
    <property type="term" value="C:cytosolic large ribosomal subunit"/>
    <property type="evidence" value="ECO:0007669"/>
    <property type="project" value="TreeGrafter"/>
</dbReference>
<dbReference type="GO" id="GO:0070180">
    <property type="term" value="F:large ribosomal subunit rRNA binding"/>
    <property type="evidence" value="ECO:0007669"/>
    <property type="project" value="UniProtKB-UniRule"/>
</dbReference>
<dbReference type="GO" id="GO:0003735">
    <property type="term" value="F:structural constituent of ribosome"/>
    <property type="evidence" value="ECO:0007669"/>
    <property type="project" value="InterPro"/>
</dbReference>
<dbReference type="GO" id="GO:0006412">
    <property type="term" value="P:translation"/>
    <property type="evidence" value="ECO:0007669"/>
    <property type="project" value="UniProtKB-UniRule"/>
</dbReference>
<dbReference type="CDD" id="cd00349">
    <property type="entry name" value="Ribosomal_L11"/>
    <property type="match status" value="1"/>
</dbReference>
<dbReference type="FunFam" id="1.10.10.250:FF:000001">
    <property type="entry name" value="50S ribosomal protein L11"/>
    <property type="match status" value="1"/>
</dbReference>
<dbReference type="FunFam" id="3.30.1550.10:FF:000001">
    <property type="entry name" value="50S ribosomal protein L11"/>
    <property type="match status" value="1"/>
</dbReference>
<dbReference type="Gene3D" id="1.10.10.250">
    <property type="entry name" value="Ribosomal protein L11, C-terminal domain"/>
    <property type="match status" value="1"/>
</dbReference>
<dbReference type="Gene3D" id="3.30.1550.10">
    <property type="entry name" value="Ribosomal protein L11/L12, N-terminal domain"/>
    <property type="match status" value="1"/>
</dbReference>
<dbReference type="HAMAP" id="MF_00736">
    <property type="entry name" value="Ribosomal_uL11"/>
    <property type="match status" value="1"/>
</dbReference>
<dbReference type="InterPro" id="IPR000911">
    <property type="entry name" value="Ribosomal_uL11"/>
</dbReference>
<dbReference type="InterPro" id="IPR006519">
    <property type="entry name" value="Ribosomal_uL11_bac-typ"/>
</dbReference>
<dbReference type="InterPro" id="IPR020783">
    <property type="entry name" value="Ribosomal_uL11_C"/>
</dbReference>
<dbReference type="InterPro" id="IPR036769">
    <property type="entry name" value="Ribosomal_uL11_C_sf"/>
</dbReference>
<dbReference type="InterPro" id="IPR020785">
    <property type="entry name" value="Ribosomal_uL11_CS"/>
</dbReference>
<dbReference type="InterPro" id="IPR020784">
    <property type="entry name" value="Ribosomal_uL11_N"/>
</dbReference>
<dbReference type="InterPro" id="IPR036796">
    <property type="entry name" value="Ribosomal_uL11_N_sf"/>
</dbReference>
<dbReference type="NCBIfam" id="TIGR01632">
    <property type="entry name" value="L11_bact"/>
    <property type="match status" value="1"/>
</dbReference>
<dbReference type="PANTHER" id="PTHR11661">
    <property type="entry name" value="60S RIBOSOMAL PROTEIN L12"/>
    <property type="match status" value="1"/>
</dbReference>
<dbReference type="PANTHER" id="PTHR11661:SF1">
    <property type="entry name" value="LARGE RIBOSOMAL SUBUNIT PROTEIN UL11M"/>
    <property type="match status" value="1"/>
</dbReference>
<dbReference type="Pfam" id="PF00298">
    <property type="entry name" value="Ribosomal_L11"/>
    <property type="match status" value="1"/>
</dbReference>
<dbReference type="Pfam" id="PF03946">
    <property type="entry name" value="Ribosomal_L11_N"/>
    <property type="match status" value="1"/>
</dbReference>
<dbReference type="SMART" id="SM00649">
    <property type="entry name" value="RL11"/>
    <property type="match status" value="1"/>
</dbReference>
<dbReference type="SUPFAM" id="SSF54747">
    <property type="entry name" value="Ribosomal L11/L12e N-terminal domain"/>
    <property type="match status" value="1"/>
</dbReference>
<dbReference type="SUPFAM" id="SSF46906">
    <property type="entry name" value="Ribosomal protein L11, C-terminal domain"/>
    <property type="match status" value="1"/>
</dbReference>
<dbReference type="PROSITE" id="PS00359">
    <property type="entry name" value="RIBOSOMAL_L11"/>
    <property type="match status" value="1"/>
</dbReference>
<evidence type="ECO:0000255" key="1">
    <source>
        <dbReference type="HAMAP-Rule" id="MF_00736"/>
    </source>
</evidence>
<evidence type="ECO:0000305" key="2"/>
<name>RL11_DEHM1</name>
<feature type="chain" id="PRO_0000258147" description="Large ribosomal subunit protein uL11">
    <location>
        <begin position="1"/>
        <end position="140"/>
    </location>
</feature>
<accession>Q3Z7T3</accession>